<name>FAU1_HYPBU</name>
<keyword id="KW-0255">Endonuclease</keyword>
<keyword id="KW-0378">Hydrolase</keyword>
<keyword id="KW-0540">Nuclease</keyword>
<keyword id="KW-1185">Reference proteome</keyword>
<keyword id="KW-0694">RNA-binding</keyword>
<keyword id="KW-0698">rRNA processing</keyword>
<sequence>MATPARRIPRVRVRGIYATALTKLVIDMGFQVVQPSRIIADRFSLPMLTLPADVTIKDSDNNPSELLIVGYEWAVNIILEKLRDTLPYSFYWRSSLPLHSTVKARVIGLRDNRCIARVGDVEAELLVDRSECIEDREVVGGVVRPGVKPRETPRIVPGARVIGDYAILIESSEPRVTISEHVRSPEKRALLAAIATSFTEQGYAVHWRSSSQHAEREELEKHLRQLREALAEARKRAEEGPPGVYSEGEAVVLVHLSSADKQKLDEIRDSVVATIPYHHTVKSLQPSLSKVIDYAEKVKALGVDSEKLVRALLELVAEDLASRRRIRILHVKPSGEYIELGKAEIKSVYVEDKSLVIVLERTVKSRGVYDGLGVEKEPGDRIVTEVRTDEWIVKHTYYAPDGTVKGTYININTPPEIAEDAIVYLDLEIDIVKKPGKKPKIVDAEELDKYHEQGIVTTKLKEKALEIARKLAG</sequence>
<proteinExistence type="inferred from homology"/>
<protein>
    <recommendedName>
        <fullName evidence="1">Probable ribonuclease FAU-1</fullName>
        <ecNumber evidence="1">3.1.26.-</ecNumber>
    </recommendedName>
    <alternativeName>
        <fullName evidence="1">RNA-binding protein FAU-1</fullName>
    </alternativeName>
</protein>
<accession>A2BN82</accession>
<dbReference type="EC" id="3.1.26.-" evidence="1"/>
<dbReference type="EMBL" id="CP000493">
    <property type="protein sequence ID" value="ABM81443.1"/>
    <property type="molecule type" value="Genomic_DNA"/>
</dbReference>
<dbReference type="RefSeq" id="WP_011822761.1">
    <property type="nucleotide sequence ID" value="NC_008818.1"/>
</dbReference>
<dbReference type="SMR" id="A2BN82"/>
<dbReference type="STRING" id="415426.Hbut_1628"/>
<dbReference type="EnsemblBacteria" id="ABM81443">
    <property type="protein sequence ID" value="ABM81443"/>
    <property type="gene ID" value="Hbut_1628"/>
</dbReference>
<dbReference type="GeneID" id="4781637"/>
<dbReference type="KEGG" id="hbu:Hbut_1628"/>
<dbReference type="eggNOG" id="arCOG04307">
    <property type="taxonomic scope" value="Archaea"/>
</dbReference>
<dbReference type="HOGENOM" id="CLU_044303_0_0_2"/>
<dbReference type="OrthoDB" id="84798at2157"/>
<dbReference type="Proteomes" id="UP000002593">
    <property type="component" value="Chromosome"/>
</dbReference>
<dbReference type="GO" id="GO:0035925">
    <property type="term" value="F:mRNA 3'-UTR AU-rich region binding"/>
    <property type="evidence" value="ECO:0007669"/>
    <property type="project" value="UniProtKB-UniRule"/>
</dbReference>
<dbReference type="GO" id="GO:0016891">
    <property type="term" value="F:RNA endonuclease activity, producing 5'-phosphomonoesters"/>
    <property type="evidence" value="ECO:0007669"/>
    <property type="project" value="UniProtKB-UniRule"/>
</dbReference>
<dbReference type="GO" id="GO:0006364">
    <property type="term" value="P:rRNA processing"/>
    <property type="evidence" value="ECO:0007669"/>
    <property type="project" value="UniProtKB-UniRule"/>
</dbReference>
<dbReference type="Gene3D" id="2.40.380.10">
    <property type="entry name" value="FomD-like"/>
    <property type="match status" value="1"/>
</dbReference>
<dbReference type="HAMAP" id="MF_01910">
    <property type="entry name" value="RNA_binding_AU_1"/>
    <property type="match status" value="1"/>
</dbReference>
<dbReference type="InterPro" id="IPR007295">
    <property type="entry name" value="DUF402"/>
</dbReference>
<dbReference type="InterPro" id="IPR035930">
    <property type="entry name" value="FomD-like_sf"/>
</dbReference>
<dbReference type="InterPro" id="IPR050212">
    <property type="entry name" value="Ntdp-like"/>
</dbReference>
<dbReference type="InterPro" id="IPR019307">
    <property type="entry name" value="RNA-bd_AU-1/RNase_E/G"/>
</dbReference>
<dbReference type="InterPro" id="IPR016730">
    <property type="entry name" value="RNA-bd_FAU-1"/>
</dbReference>
<dbReference type="PANTHER" id="PTHR39159">
    <property type="match status" value="1"/>
</dbReference>
<dbReference type="PANTHER" id="PTHR39159:SF1">
    <property type="entry name" value="UPF0374 PROTEIN YGAC"/>
    <property type="match status" value="1"/>
</dbReference>
<dbReference type="Pfam" id="PF04167">
    <property type="entry name" value="DUF402"/>
    <property type="match status" value="1"/>
</dbReference>
<dbReference type="Pfam" id="PF10150">
    <property type="entry name" value="RNase_E_G"/>
    <property type="match status" value="1"/>
</dbReference>
<dbReference type="PIRSF" id="PIRSF018644">
    <property type="entry name" value="RNA-binding_FAU-1"/>
    <property type="match status" value="1"/>
</dbReference>
<dbReference type="SUPFAM" id="SSF159234">
    <property type="entry name" value="FomD-like"/>
    <property type="match status" value="1"/>
</dbReference>
<organism>
    <name type="scientific">Hyperthermus butylicus (strain DSM 5456 / JCM 9403 / PLM1-5)</name>
    <dbReference type="NCBI Taxonomy" id="415426"/>
    <lineage>
        <taxon>Archaea</taxon>
        <taxon>Thermoproteota</taxon>
        <taxon>Thermoprotei</taxon>
        <taxon>Desulfurococcales</taxon>
        <taxon>Pyrodictiaceae</taxon>
        <taxon>Hyperthermus</taxon>
    </lineage>
</organism>
<feature type="chain" id="PRO_0000334198" description="Probable ribonuclease FAU-1">
    <location>
        <begin position="1"/>
        <end position="473"/>
    </location>
</feature>
<reference key="1">
    <citation type="journal article" date="2007" name="Archaea">
        <title>The genome of Hyperthermus butylicus: a sulfur-reducing, peptide fermenting, neutrophilic Crenarchaeote growing up to 108 degrees C.</title>
        <authorList>
            <person name="Bruegger K."/>
            <person name="Chen L."/>
            <person name="Stark M."/>
            <person name="Zibat A."/>
            <person name="Redder P."/>
            <person name="Ruepp A."/>
            <person name="Awayez M."/>
            <person name="She Q."/>
            <person name="Garrett R.A."/>
            <person name="Klenk H.-P."/>
        </authorList>
    </citation>
    <scope>NUCLEOTIDE SEQUENCE [LARGE SCALE GENOMIC DNA]</scope>
    <source>
        <strain>DSM 5456 / JCM 9403 / PLM1-5</strain>
    </source>
</reference>
<evidence type="ECO:0000255" key="1">
    <source>
        <dbReference type="HAMAP-Rule" id="MF_01910"/>
    </source>
</evidence>
<comment type="function">
    <text evidence="1">Probable RNase involved in rRNA stability through maturation and/or degradation of precursor rRNAs. Binds to RNA in loop regions with AU-rich sequences.</text>
</comment>
<comment type="similarity">
    <text evidence="1">Belongs to the FAU-1 family.</text>
</comment>
<gene>
    <name evidence="1" type="primary">fau-1</name>
    <name type="ordered locus">Hbut_1628</name>
</gene>